<name>LPXH_HISS2</name>
<sequence length="234" mass="27324">MKKTFFIADLHLSENRPHLTELFVHFMQTQAPQAEKLYILGDLFDFWIGDDEQSALIETVQQQILQLTQKGISCYFIHGNRDFLVGRQFANSCGMELLPTYQIVNLYGKKVLICHGDTLCTDDLAYQQYRKKVQQKWLQWLFLHLPLKVRLKIAEKIRQKSKTDKTHKSIEIMDVNKDFVEQIMQQFQVNILIHGHTHKQNIHQNPPHFTRIVLGDWGATASVLEVSANGFQFI</sequence>
<keyword id="KW-0997">Cell inner membrane</keyword>
<keyword id="KW-1003">Cell membrane</keyword>
<keyword id="KW-0378">Hydrolase</keyword>
<keyword id="KW-0441">Lipid A biosynthesis</keyword>
<keyword id="KW-0444">Lipid biosynthesis</keyword>
<keyword id="KW-0443">Lipid metabolism</keyword>
<keyword id="KW-0464">Manganese</keyword>
<keyword id="KW-0472">Membrane</keyword>
<keyword id="KW-0479">Metal-binding</keyword>
<feature type="chain" id="PRO_1000082336" description="UDP-2,3-diacylglucosamine hydrolase">
    <location>
        <begin position="1"/>
        <end position="234"/>
    </location>
</feature>
<feature type="binding site" evidence="1">
    <location>
        <position position="9"/>
    </location>
    <ligand>
        <name>Mn(2+)</name>
        <dbReference type="ChEBI" id="CHEBI:29035"/>
        <label>1</label>
    </ligand>
</feature>
<feature type="binding site" evidence="1">
    <location>
        <position position="11"/>
    </location>
    <ligand>
        <name>Mn(2+)</name>
        <dbReference type="ChEBI" id="CHEBI:29035"/>
        <label>1</label>
    </ligand>
</feature>
<feature type="binding site" evidence="1">
    <location>
        <position position="42"/>
    </location>
    <ligand>
        <name>Mn(2+)</name>
        <dbReference type="ChEBI" id="CHEBI:29035"/>
        <label>1</label>
    </ligand>
</feature>
<feature type="binding site" evidence="1">
    <location>
        <position position="42"/>
    </location>
    <ligand>
        <name>Mn(2+)</name>
        <dbReference type="ChEBI" id="CHEBI:29035"/>
        <label>2</label>
    </ligand>
</feature>
<feature type="binding site" evidence="1">
    <location>
        <begin position="80"/>
        <end position="81"/>
    </location>
    <ligand>
        <name>substrate</name>
    </ligand>
</feature>
<feature type="binding site" evidence="1">
    <location>
        <position position="80"/>
    </location>
    <ligand>
        <name>Mn(2+)</name>
        <dbReference type="ChEBI" id="CHEBI:29035"/>
        <label>2</label>
    </ligand>
</feature>
<feature type="binding site" evidence="1">
    <location>
        <position position="115"/>
    </location>
    <ligand>
        <name>Mn(2+)</name>
        <dbReference type="ChEBI" id="CHEBI:29035"/>
        <label>2</label>
    </ligand>
</feature>
<feature type="binding site" evidence="1">
    <location>
        <position position="123"/>
    </location>
    <ligand>
        <name>substrate</name>
    </ligand>
</feature>
<feature type="binding site" evidence="1">
    <location>
        <position position="161"/>
    </location>
    <ligand>
        <name>substrate</name>
    </ligand>
</feature>
<feature type="binding site" evidence="1">
    <location>
        <position position="165"/>
    </location>
    <ligand>
        <name>substrate</name>
    </ligand>
</feature>
<feature type="binding site" evidence="1">
    <location>
        <position position="168"/>
    </location>
    <ligand>
        <name>substrate</name>
    </ligand>
</feature>
<feature type="binding site" evidence="1">
    <location>
        <position position="196"/>
    </location>
    <ligand>
        <name>Mn(2+)</name>
        <dbReference type="ChEBI" id="CHEBI:29035"/>
        <label>2</label>
    </ligand>
</feature>
<feature type="binding site" evidence="1">
    <location>
        <position position="196"/>
    </location>
    <ligand>
        <name>substrate</name>
    </ligand>
</feature>
<feature type="binding site" evidence="1">
    <location>
        <position position="198"/>
    </location>
    <ligand>
        <name>Mn(2+)</name>
        <dbReference type="ChEBI" id="CHEBI:29035"/>
        <label>1</label>
    </ligand>
</feature>
<protein>
    <recommendedName>
        <fullName evidence="1">UDP-2,3-diacylglucosamine hydrolase</fullName>
        <ecNumber evidence="1">3.6.1.54</ecNumber>
    </recommendedName>
    <alternativeName>
        <fullName evidence="1">UDP-2,3-diacylglucosamine diphosphatase</fullName>
    </alternativeName>
</protein>
<reference key="1">
    <citation type="submission" date="2008-02" db="EMBL/GenBank/DDBJ databases">
        <title>Complete sequence of Haemophilus somnus 2336.</title>
        <authorList>
            <consortium name="US DOE Joint Genome Institute"/>
            <person name="Siddaramappa S."/>
            <person name="Duncan A.J."/>
            <person name="Challacombe J.F."/>
            <person name="Rainey D."/>
            <person name="Gillaspy A.F."/>
            <person name="Carson M."/>
            <person name="Gipson J."/>
            <person name="Gipson M."/>
            <person name="Bruce D."/>
            <person name="Detter J.C."/>
            <person name="Han C.S."/>
            <person name="Land M."/>
            <person name="Tapia R."/>
            <person name="Thompson L.S."/>
            <person name="Orvis J."/>
            <person name="Zaitshik J."/>
            <person name="Barnes G."/>
            <person name="Brettin T.S."/>
            <person name="Dyer D.W."/>
            <person name="Inzana T.J."/>
        </authorList>
    </citation>
    <scope>NUCLEOTIDE SEQUENCE [LARGE SCALE GENOMIC DNA]</scope>
    <source>
        <strain>2336</strain>
    </source>
</reference>
<comment type="function">
    <text evidence="1">Hydrolyzes the pyrophosphate bond of UDP-2,3-diacylglucosamine to yield 2,3-diacylglucosamine 1-phosphate (lipid X) and UMP by catalyzing the attack of water at the alpha-P atom. Involved in the biosynthesis of lipid A, a phosphorylated glycolipid that anchors the lipopolysaccharide to the outer membrane of the cell.</text>
</comment>
<comment type="catalytic activity">
    <reaction evidence="1">
        <text>UDP-2-N,3-O-bis[(3R)-3-hydroxytetradecanoyl]-alpha-D-glucosamine + H2O = 2-N,3-O-bis[(3R)-3-hydroxytetradecanoyl]-alpha-D-glucosaminyl 1-phosphate + UMP + 2 H(+)</text>
        <dbReference type="Rhea" id="RHEA:25213"/>
        <dbReference type="ChEBI" id="CHEBI:15377"/>
        <dbReference type="ChEBI" id="CHEBI:15378"/>
        <dbReference type="ChEBI" id="CHEBI:57865"/>
        <dbReference type="ChEBI" id="CHEBI:57957"/>
        <dbReference type="ChEBI" id="CHEBI:78847"/>
        <dbReference type="EC" id="3.6.1.54"/>
    </reaction>
</comment>
<comment type="cofactor">
    <cofactor evidence="1">
        <name>Mn(2+)</name>
        <dbReference type="ChEBI" id="CHEBI:29035"/>
    </cofactor>
    <text evidence="1">Binds 2 Mn(2+) ions per subunit in a binuclear metal center.</text>
</comment>
<comment type="pathway">
    <text evidence="1">Glycolipid biosynthesis; lipid IV(A) biosynthesis; lipid IV(A) from (3R)-3-hydroxytetradecanoyl-[acyl-carrier-protein] and UDP-N-acetyl-alpha-D-glucosamine: step 4/6.</text>
</comment>
<comment type="subcellular location">
    <subcellularLocation>
        <location evidence="1">Cell inner membrane</location>
        <topology evidence="1">Peripheral membrane protein</topology>
        <orientation evidence="1">Cytoplasmic side</orientation>
    </subcellularLocation>
</comment>
<comment type="similarity">
    <text evidence="1">Belongs to the LpxH family.</text>
</comment>
<accession>B0UVZ2</accession>
<gene>
    <name evidence="1" type="primary">lpxH</name>
    <name type="ordered locus">HSM_1773</name>
</gene>
<organism>
    <name type="scientific">Histophilus somni (strain 2336)</name>
    <name type="common">Haemophilus somnus</name>
    <dbReference type="NCBI Taxonomy" id="228400"/>
    <lineage>
        <taxon>Bacteria</taxon>
        <taxon>Pseudomonadati</taxon>
        <taxon>Pseudomonadota</taxon>
        <taxon>Gammaproteobacteria</taxon>
        <taxon>Pasteurellales</taxon>
        <taxon>Pasteurellaceae</taxon>
        <taxon>Histophilus</taxon>
    </lineage>
</organism>
<proteinExistence type="inferred from homology"/>
<dbReference type="EC" id="3.6.1.54" evidence="1"/>
<dbReference type="EMBL" id="CP000947">
    <property type="protein sequence ID" value="ACA31555.1"/>
    <property type="molecule type" value="Genomic_DNA"/>
</dbReference>
<dbReference type="RefSeq" id="WP_012340878.1">
    <property type="nucleotide sequence ID" value="NC_010519.1"/>
</dbReference>
<dbReference type="SMR" id="B0UVZ2"/>
<dbReference type="STRING" id="228400.HSM_1773"/>
<dbReference type="GeneID" id="31488080"/>
<dbReference type="KEGG" id="hsm:HSM_1773"/>
<dbReference type="HOGENOM" id="CLU_074586_0_0_6"/>
<dbReference type="UniPathway" id="UPA00359">
    <property type="reaction ID" value="UER00480"/>
</dbReference>
<dbReference type="GO" id="GO:0005737">
    <property type="term" value="C:cytoplasm"/>
    <property type="evidence" value="ECO:0007669"/>
    <property type="project" value="InterPro"/>
</dbReference>
<dbReference type="GO" id="GO:0019897">
    <property type="term" value="C:extrinsic component of plasma membrane"/>
    <property type="evidence" value="ECO:0007669"/>
    <property type="project" value="UniProtKB-UniRule"/>
</dbReference>
<dbReference type="GO" id="GO:0030145">
    <property type="term" value="F:manganese ion binding"/>
    <property type="evidence" value="ECO:0007669"/>
    <property type="project" value="UniProtKB-UniRule"/>
</dbReference>
<dbReference type="GO" id="GO:0008758">
    <property type="term" value="F:UDP-2,3-diacylglucosamine hydrolase activity"/>
    <property type="evidence" value="ECO:0007669"/>
    <property type="project" value="UniProtKB-UniRule"/>
</dbReference>
<dbReference type="GO" id="GO:0009245">
    <property type="term" value="P:lipid A biosynthetic process"/>
    <property type="evidence" value="ECO:0007669"/>
    <property type="project" value="UniProtKB-UniRule"/>
</dbReference>
<dbReference type="CDD" id="cd07398">
    <property type="entry name" value="MPP_YbbF-LpxH"/>
    <property type="match status" value="1"/>
</dbReference>
<dbReference type="Gene3D" id="3.60.21.10">
    <property type="match status" value="1"/>
</dbReference>
<dbReference type="HAMAP" id="MF_00575">
    <property type="entry name" value="LpxH"/>
    <property type="match status" value="1"/>
</dbReference>
<dbReference type="InterPro" id="IPR004843">
    <property type="entry name" value="Calcineurin-like_PHP_ApaH"/>
</dbReference>
<dbReference type="InterPro" id="IPR043461">
    <property type="entry name" value="LpxH-like"/>
</dbReference>
<dbReference type="InterPro" id="IPR029052">
    <property type="entry name" value="Metallo-depent_PP-like"/>
</dbReference>
<dbReference type="InterPro" id="IPR010138">
    <property type="entry name" value="UDP-diacylglucosamine_Hdrlase"/>
</dbReference>
<dbReference type="NCBIfam" id="TIGR01854">
    <property type="entry name" value="lipid_A_lpxH"/>
    <property type="match status" value="1"/>
</dbReference>
<dbReference type="NCBIfam" id="NF003743">
    <property type="entry name" value="PRK05340.1"/>
    <property type="match status" value="1"/>
</dbReference>
<dbReference type="PANTHER" id="PTHR34990:SF1">
    <property type="entry name" value="UDP-2,3-DIACYLGLUCOSAMINE HYDROLASE"/>
    <property type="match status" value="1"/>
</dbReference>
<dbReference type="PANTHER" id="PTHR34990">
    <property type="entry name" value="UDP-2,3-DIACYLGLUCOSAMINE HYDROLASE-RELATED"/>
    <property type="match status" value="1"/>
</dbReference>
<dbReference type="Pfam" id="PF00149">
    <property type="entry name" value="Metallophos"/>
    <property type="match status" value="1"/>
</dbReference>
<dbReference type="SUPFAM" id="SSF56300">
    <property type="entry name" value="Metallo-dependent phosphatases"/>
    <property type="match status" value="1"/>
</dbReference>
<evidence type="ECO:0000255" key="1">
    <source>
        <dbReference type="HAMAP-Rule" id="MF_00575"/>
    </source>
</evidence>